<evidence type="ECO:0000255" key="1">
    <source>
        <dbReference type="HAMAP-Rule" id="MF_00144"/>
    </source>
</evidence>
<sequence length="356" mass="38449">MHIAVAVSGGTDSLFALLQVLEAGHQVTALHAHFLSPHDTPETTAHNTQAIEKACRALGADFHVEDLSAAFRKHVIEPFIDAYRQGRTPNPCARCNASMKFGLLADTARKLGAQAIATGHYARLQPDLPRPGNTVSLWRGDDPAKDQSYFLSLVPQHRLACAVFPLGGWRKQDVRAHLKQRGIVPPLPSESQEICFIPGDDYRAYLTAHAAGLPGAGPMVLRDGHVVGHHNGLWQYTEGQRRGLGIAWSEPLYVLEKDVSRNALVVGTRKQLTARGCRCVGVNTLVPPDQWPDAVYVKTRYRQTMIAAQVTPDADGADTMRVIFAASHTPPAAGQVAAVYDAAGRVLAGGIIASVF</sequence>
<accession>Q313S6</accession>
<feature type="chain" id="PRO_0000349615" description="tRNA-specific 2-thiouridylase MnmA">
    <location>
        <begin position="1"/>
        <end position="356"/>
    </location>
</feature>
<feature type="region of interest" description="Interaction with tRNA" evidence="1">
    <location>
        <begin position="145"/>
        <end position="147"/>
    </location>
</feature>
<feature type="region of interest" description="Interaction with tRNA" evidence="1">
    <location>
        <begin position="300"/>
        <end position="301"/>
    </location>
</feature>
<feature type="active site" description="Nucleophile" evidence="1">
    <location>
        <position position="95"/>
    </location>
</feature>
<feature type="active site" description="Cysteine persulfide intermediate" evidence="1">
    <location>
        <position position="195"/>
    </location>
</feature>
<feature type="binding site" evidence="1">
    <location>
        <begin position="6"/>
        <end position="13"/>
    </location>
    <ligand>
        <name>ATP</name>
        <dbReference type="ChEBI" id="CHEBI:30616"/>
    </ligand>
</feature>
<feature type="binding site" evidence="1">
    <location>
        <position position="119"/>
    </location>
    <ligand>
        <name>ATP</name>
        <dbReference type="ChEBI" id="CHEBI:30616"/>
    </ligand>
</feature>
<feature type="site" description="Interaction with tRNA" evidence="1">
    <location>
        <position position="120"/>
    </location>
</feature>
<feature type="site" description="Interaction with tRNA" evidence="1">
    <location>
        <position position="335"/>
    </location>
</feature>
<feature type="disulfide bond" description="Alternate" evidence="1">
    <location>
        <begin position="95"/>
        <end position="195"/>
    </location>
</feature>
<dbReference type="EC" id="2.8.1.13" evidence="1"/>
<dbReference type="EMBL" id="CP000112">
    <property type="protein sequence ID" value="ABB37820.1"/>
    <property type="molecule type" value="Genomic_DNA"/>
</dbReference>
<dbReference type="RefSeq" id="WP_011367057.1">
    <property type="nucleotide sequence ID" value="NC_007519.1"/>
</dbReference>
<dbReference type="SMR" id="Q313S6"/>
<dbReference type="STRING" id="207559.Dde_1019"/>
<dbReference type="KEGG" id="dde:Dde_1019"/>
<dbReference type="eggNOG" id="COG0482">
    <property type="taxonomic scope" value="Bacteria"/>
</dbReference>
<dbReference type="HOGENOM" id="CLU_035188_0_0_7"/>
<dbReference type="Proteomes" id="UP000002710">
    <property type="component" value="Chromosome"/>
</dbReference>
<dbReference type="GO" id="GO:0005737">
    <property type="term" value="C:cytoplasm"/>
    <property type="evidence" value="ECO:0007669"/>
    <property type="project" value="UniProtKB-SubCell"/>
</dbReference>
<dbReference type="GO" id="GO:0005524">
    <property type="term" value="F:ATP binding"/>
    <property type="evidence" value="ECO:0007669"/>
    <property type="project" value="UniProtKB-KW"/>
</dbReference>
<dbReference type="GO" id="GO:0000049">
    <property type="term" value="F:tRNA binding"/>
    <property type="evidence" value="ECO:0007669"/>
    <property type="project" value="UniProtKB-KW"/>
</dbReference>
<dbReference type="GO" id="GO:0103016">
    <property type="term" value="F:tRNA-uridine 2-sulfurtransferase activity"/>
    <property type="evidence" value="ECO:0007669"/>
    <property type="project" value="UniProtKB-EC"/>
</dbReference>
<dbReference type="GO" id="GO:0002143">
    <property type="term" value="P:tRNA wobble position uridine thiolation"/>
    <property type="evidence" value="ECO:0007669"/>
    <property type="project" value="TreeGrafter"/>
</dbReference>
<dbReference type="CDD" id="cd01998">
    <property type="entry name" value="MnmA_TRMU-like"/>
    <property type="match status" value="1"/>
</dbReference>
<dbReference type="FunFam" id="2.30.30.280:FF:000001">
    <property type="entry name" value="tRNA-specific 2-thiouridylase MnmA"/>
    <property type="match status" value="1"/>
</dbReference>
<dbReference type="Gene3D" id="2.30.30.280">
    <property type="entry name" value="Adenine nucleotide alpha hydrolases-like domains"/>
    <property type="match status" value="1"/>
</dbReference>
<dbReference type="Gene3D" id="3.40.50.620">
    <property type="entry name" value="HUPs"/>
    <property type="match status" value="1"/>
</dbReference>
<dbReference type="Gene3D" id="2.40.30.10">
    <property type="entry name" value="Translation factors"/>
    <property type="match status" value="1"/>
</dbReference>
<dbReference type="HAMAP" id="MF_00144">
    <property type="entry name" value="tRNA_thiouridyl_MnmA"/>
    <property type="match status" value="1"/>
</dbReference>
<dbReference type="InterPro" id="IPR004506">
    <property type="entry name" value="MnmA-like"/>
</dbReference>
<dbReference type="InterPro" id="IPR046885">
    <property type="entry name" value="MnmA-like_C"/>
</dbReference>
<dbReference type="InterPro" id="IPR046884">
    <property type="entry name" value="MnmA-like_central"/>
</dbReference>
<dbReference type="InterPro" id="IPR023382">
    <property type="entry name" value="MnmA-like_central_sf"/>
</dbReference>
<dbReference type="InterPro" id="IPR014729">
    <property type="entry name" value="Rossmann-like_a/b/a_fold"/>
</dbReference>
<dbReference type="NCBIfam" id="NF001138">
    <property type="entry name" value="PRK00143.1"/>
    <property type="match status" value="1"/>
</dbReference>
<dbReference type="NCBIfam" id="TIGR00420">
    <property type="entry name" value="trmU"/>
    <property type="match status" value="1"/>
</dbReference>
<dbReference type="PANTHER" id="PTHR11933:SF5">
    <property type="entry name" value="MITOCHONDRIAL TRNA-SPECIFIC 2-THIOURIDYLASE 1"/>
    <property type="match status" value="1"/>
</dbReference>
<dbReference type="PANTHER" id="PTHR11933">
    <property type="entry name" value="TRNA 5-METHYLAMINOMETHYL-2-THIOURIDYLATE -METHYLTRANSFERASE"/>
    <property type="match status" value="1"/>
</dbReference>
<dbReference type="Pfam" id="PF03054">
    <property type="entry name" value="tRNA_Me_trans"/>
    <property type="match status" value="1"/>
</dbReference>
<dbReference type="Pfam" id="PF20258">
    <property type="entry name" value="tRNA_Me_trans_C"/>
    <property type="match status" value="1"/>
</dbReference>
<dbReference type="Pfam" id="PF20259">
    <property type="entry name" value="tRNA_Me_trans_M"/>
    <property type="match status" value="1"/>
</dbReference>
<dbReference type="SUPFAM" id="SSF52402">
    <property type="entry name" value="Adenine nucleotide alpha hydrolases-like"/>
    <property type="match status" value="1"/>
</dbReference>
<proteinExistence type="inferred from homology"/>
<name>MNMA_OLEA2</name>
<protein>
    <recommendedName>
        <fullName evidence="1">tRNA-specific 2-thiouridylase MnmA</fullName>
        <ecNumber evidence="1">2.8.1.13</ecNumber>
    </recommendedName>
</protein>
<reference key="1">
    <citation type="journal article" date="2011" name="J. Bacteriol.">
        <title>Complete genome sequence and updated annotation of Desulfovibrio alaskensis G20.</title>
        <authorList>
            <person name="Hauser L.J."/>
            <person name="Land M.L."/>
            <person name="Brown S.D."/>
            <person name="Larimer F."/>
            <person name="Keller K.L."/>
            <person name="Rapp-Giles B.J."/>
            <person name="Price M.N."/>
            <person name="Lin M."/>
            <person name="Bruce D.C."/>
            <person name="Detter J.C."/>
            <person name="Tapia R."/>
            <person name="Han C.S."/>
            <person name="Goodwin L.A."/>
            <person name="Cheng J.F."/>
            <person name="Pitluck S."/>
            <person name="Copeland A."/>
            <person name="Lucas S."/>
            <person name="Nolan M."/>
            <person name="Lapidus A.L."/>
            <person name="Palumbo A.V."/>
            <person name="Wall J.D."/>
        </authorList>
    </citation>
    <scope>NUCLEOTIDE SEQUENCE [LARGE SCALE GENOMIC DNA]</scope>
    <source>
        <strain>ATCC BAA-1058 / DSM 17464 / G20</strain>
    </source>
</reference>
<keyword id="KW-0067">ATP-binding</keyword>
<keyword id="KW-0963">Cytoplasm</keyword>
<keyword id="KW-1015">Disulfide bond</keyword>
<keyword id="KW-0547">Nucleotide-binding</keyword>
<keyword id="KW-1185">Reference proteome</keyword>
<keyword id="KW-0694">RNA-binding</keyword>
<keyword id="KW-0808">Transferase</keyword>
<keyword id="KW-0819">tRNA processing</keyword>
<keyword id="KW-0820">tRNA-binding</keyword>
<comment type="function">
    <text evidence="1">Catalyzes the 2-thiolation of uridine at the wobble position (U34) of tRNA, leading to the formation of s(2)U34.</text>
</comment>
<comment type="catalytic activity">
    <reaction evidence="1">
        <text>S-sulfanyl-L-cysteinyl-[protein] + uridine(34) in tRNA + AH2 + ATP = 2-thiouridine(34) in tRNA + L-cysteinyl-[protein] + A + AMP + diphosphate + H(+)</text>
        <dbReference type="Rhea" id="RHEA:47032"/>
        <dbReference type="Rhea" id="RHEA-COMP:10131"/>
        <dbReference type="Rhea" id="RHEA-COMP:11726"/>
        <dbReference type="Rhea" id="RHEA-COMP:11727"/>
        <dbReference type="Rhea" id="RHEA-COMP:11728"/>
        <dbReference type="ChEBI" id="CHEBI:13193"/>
        <dbReference type="ChEBI" id="CHEBI:15378"/>
        <dbReference type="ChEBI" id="CHEBI:17499"/>
        <dbReference type="ChEBI" id="CHEBI:29950"/>
        <dbReference type="ChEBI" id="CHEBI:30616"/>
        <dbReference type="ChEBI" id="CHEBI:33019"/>
        <dbReference type="ChEBI" id="CHEBI:61963"/>
        <dbReference type="ChEBI" id="CHEBI:65315"/>
        <dbReference type="ChEBI" id="CHEBI:87170"/>
        <dbReference type="ChEBI" id="CHEBI:456215"/>
        <dbReference type="EC" id="2.8.1.13"/>
    </reaction>
</comment>
<comment type="subcellular location">
    <subcellularLocation>
        <location evidence="1">Cytoplasm</location>
    </subcellularLocation>
</comment>
<comment type="similarity">
    <text evidence="1">Belongs to the MnmA/TRMU family.</text>
</comment>
<gene>
    <name evidence="1" type="primary">mnmA</name>
    <name type="ordered locus">Dde_1019</name>
</gene>
<organism>
    <name type="scientific">Oleidesulfovibrio alaskensis (strain ATCC BAA-1058 / DSM 17464 / G20)</name>
    <name type="common">Desulfovibrio alaskensis</name>
    <dbReference type="NCBI Taxonomy" id="207559"/>
    <lineage>
        <taxon>Bacteria</taxon>
        <taxon>Pseudomonadati</taxon>
        <taxon>Thermodesulfobacteriota</taxon>
        <taxon>Desulfovibrionia</taxon>
        <taxon>Desulfovibrionales</taxon>
        <taxon>Desulfovibrionaceae</taxon>
        <taxon>Oleidesulfovibrio</taxon>
    </lineage>
</organism>